<sequence>MPLPADLPPHERPRERLLRHGPASLRDAELLALALRTGTRGRTAIDMGSQLLHRYGGLRGLFAASPQELMSLPGLGAAKAGTLAAILELARRAAEERLMRQQAMSEPGSVKRYFKTALANCAVEHCLALYLDSQLNLITSGELARGTLARASVYPREVVREALRHHAAALILAHNHPSGSAQPSQADRDFTRHMQQALALVEIRLLDHLIVAGDTVVSMAELGLL</sequence>
<protein>
    <recommendedName>
        <fullName>UPF0758 protein Bpet3149</fullName>
    </recommendedName>
</protein>
<comment type="similarity">
    <text evidence="2">Belongs to the UPF0758 family.</text>
</comment>
<evidence type="ECO:0000255" key="1">
    <source>
        <dbReference type="PROSITE-ProRule" id="PRU01182"/>
    </source>
</evidence>
<evidence type="ECO:0000305" key="2"/>
<gene>
    <name type="ordered locus">Bpet3149</name>
</gene>
<keyword id="KW-0378">Hydrolase</keyword>
<keyword id="KW-0479">Metal-binding</keyword>
<keyword id="KW-0482">Metalloprotease</keyword>
<keyword id="KW-0645">Protease</keyword>
<keyword id="KW-0862">Zinc</keyword>
<reference key="1">
    <citation type="journal article" date="2008" name="BMC Genomics">
        <title>The missing link: Bordetella petrii is endowed with both the metabolic versatility of environmental bacteria and virulence traits of pathogenic Bordetellae.</title>
        <authorList>
            <person name="Gross R."/>
            <person name="Guzman C.A."/>
            <person name="Sebaihia M."/>
            <person name="Martin dos Santos V.A.P."/>
            <person name="Pieper D.H."/>
            <person name="Koebnik R."/>
            <person name="Lechner M."/>
            <person name="Bartels D."/>
            <person name="Buhrmester J."/>
            <person name="Choudhuri J.V."/>
            <person name="Ebensen T."/>
            <person name="Gaigalat L."/>
            <person name="Herrmann S."/>
            <person name="Khachane A.N."/>
            <person name="Larisch C."/>
            <person name="Link S."/>
            <person name="Linke B."/>
            <person name="Meyer F."/>
            <person name="Mormann S."/>
            <person name="Nakunst D."/>
            <person name="Rueckert C."/>
            <person name="Schneiker-Bekel S."/>
            <person name="Schulze K."/>
            <person name="Voerholter F.-J."/>
            <person name="Yevsa T."/>
            <person name="Engle J.T."/>
            <person name="Goldman W.E."/>
            <person name="Puehler A."/>
            <person name="Goebel U.B."/>
            <person name="Goesmann A."/>
            <person name="Bloecker H."/>
            <person name="Kaiser O."/>
            <person name="Martinez-Arias R."/>
        </authorList>
    </citation>
    <scope>NUCLEOTIDE SEQUENCE [LARGE SCALE GENOMIC DNA]</scope>
    <source>
        <strain>ATCC BAA-461 / DSM 12804 / CCUG 43448</strain>
    </source>
</reference>
<name>Y3149_BORPD</name>
<dbReference type="EMBL" id="AM902716">
    <property type="protein sequence ID" value="CAP43491.1"/>
    <property type="molecule type" value="Genomic_DNA"/>
</dbReference>
<dbReference type="SMR" id="A9IU27"/>
<dbReference type="STRING" id="94624.Bpet3149"/>
<dbReference type="KEGG" id="bpt:Bpet3149"/>
<dbReference type="eggNOG" id="COG2003">
    <property type="taxonomic scope" value="Bacteria"/>
</dbReference>
<dbReference type="Proteomes" id="UP000001225">
    <property type="component" value="Chromosome"/>
</dbReference>
<dbReference type="GO" id="GO:0046872">
    <property type="term" value="F:metal ion binding"/>
    <property type="evidence" value="ECO:0007669"/>
    <property type="project" value="UniProtKB-KW"/>
</dbReference>
<dbReference type="GO" id="GO:0008237">
    <property type="term" value="F:metallopeptidase activity"/>
    <property type="evidence" value="ECO:0007669"/>
    <property type="project" value="UniProtKB-KW"/>
</dbReference>
<dbReference type="GO" id="GO:0006508">
    <property type="term" value="P:proteolysis"/>
    <property type="evidence" value="ECO:0007669"/>
    <property type="project" value="UniProtKB-KW"/>
</dbReference>
<dbReference type="CDD" id="cd08071">
    <property type="entry name" value="MPN_DUF2466"/>
    <property type="match status" value="1"/>
</dbReference>
<dbReference type="Gene3D" id="1.10.150.20">
    <property type="entry name" value="5' to 3' exonuclease, C-terminal subdomain"/>
    <property type="match status" value="1"/>
</dbReference>
<dbReference type="Gene3D" id="3.40.140.10">
    <property type="entry name" value="Cytidine Deaminase, domain 2"/>
    <property type="match status" value="1"/>
</dbReference>
<dbReference type="InterPro" id="IPR037518">
    <property type="entry name" value="MPN"/>
</dbReference>
<dbReference type="InterPro" id="IPR025657">
    <property type="entry name" value="RadC_JAB"/>
</dbReference>
<dbReference type="InterPro" id="IPR010994">
    <property type="entry name" value="RuvA_2-like"/>
</dbReference>
<dbReference type="InterPro" id="IPR001405">
    <property type="entry name" value="UPF0758"/>
</dbReference>
<dbReference type="InterPro" id="IPR020891">
    <property type="entry name" value="UPF0758_CS"/>
</dbReference>
<dbReference type="InterPro" id="IPR046778">
    <property type="entry name" value="UPF0758_N"/>
</dbReference>
<dbReference type="NCBIfam" id="NF000642">
    <property type="entry name" value="PRK00024.1"/>
    <property type="match status" value="1"/>
</dbReference>
<dbReference type="NCBIfam" id="TIGR00608">
    <property type="entry name" value="radc"/>
    <property type="match status" value="1"/>
</dbReference>
<dbReference type="PANTHER" id="PTHR30471">
    <property type="entry name" value="DNA REPAIR PROTEIN RADC"/>
    <property type="match status" value="1"/>
</dbReference>
<dbReference type="PANTHER" id="PTHR30471:SF3">
    <property type="entry name" value="UPF0758 PROTEIN YEES-RELATED"/>
    <property type="match status" value="1"/>
</dbReference>
<dbReference type="Pfam" id="PF04002">
    <property type="entry name" value="RadC"/>
    <property type="match status" value="1"/>
</dbReference>
<dbReference type="Pfam" id="PF20582">
    <property type="entry name" value="UPF0758_N"/>
    <property type="match status" value="1"/>
</dbReference>
<dbReference type="SUPFAM" id="SSF102712">
    <property type="entry name" value="JAB1/MPN domain"/>
    <property type="match status" value="1"/>
</dbReference>
<dbReference type="SUPFAM" id="SSF47781">
    <property type="entry name" value="RuvA domain 2-like"/>
    <property type="match status" value="1"/>
</dbReference>
<dbReference type="PROSITE" id="PS50249">
    <property type="entry name" value="MPN"/>
    <property type="match status" value="1"/>
</dbReference>
<dbReference type="PROSITE" id="PS01302">
    <property type="entry name" value="UPF0758"/>
    <property type="match status" value="1"/>
</dbReference>
<feature type="chain" id="PRO_1000089792" description="UPF0758 protein Bpet3149">
    <location>
        <begin position="1"/>
        <end position="225"/>
    </location>
</feature>
<feature type="domain" description="MPN" evidence="1">
    <location>
        <begin position="103"/>
        <end position="225"/>
    </location>
</feature>
<feature type="short sequence motif" description="JAMM motif" evidence="1">
    <location>
        <begin position="174"/>
        <end position="187"/>
    </location>
</feature>
<feature type="binding site" evidence="1">
    <location>
        <position position="174"/>
    </location>
    <ligand>
        <name>Zn(2+)</name>
        <dbReference type="ChEBI" id="CHEBI:29105"/>
        <note>catalytic</note>
    </ligand>
</feature>
<feature type="binding site" evidence="1">
    <location>
        <position position="176"/>
    </location>
    <ligand>
        <name>Zn(2+)</name>
        <dbReference type="ChEBI" id="CHEBI:29105"/>
        <note>catalytic</note>
    </ligand>
</feature>
<feature type="binding site" evidence="1">
    <location>
        <position position="187"/>
    </location>
    <ligand>
        <name>Zn(2+)</name>
        <dbReference type="ChEBI" id="CHEBI:29105"/>
        <note>catalytic</note>
    </ligand>
</feature>
<accession>A9IU27</accession>
<organism>
    <name type="scientific">Bordetella petrii (strain ATCC BAA-461 / DSM 12804 / CCUG 43448)</name>
    <dbReference type="NCBI Taxonomy" id="340100"/>
    <lineage>
        <taxon>Bacteria</taxon>
        <taxon>Pseudomonadati</taxon>
        <taxon>Pseudomonadota</taxon>
        <taxon>Betaproteobacteria</taxon>
        <taxon>Burkholderiales</taxon>
        <taxon>Alcaligenaceae</taxon>
        <taxon>Bordetella</taxon>
    </lineage>
</organism>
<proteinExistence type="inferred from homology"/>